<evidence type="ECO:0000255" key="1">
    <source>
        <dbReference type="HAMAP-Rule" id="MF_00575"/>
    </source>
</evidence>
<sequence>MKPAYFISDLHLSEKQPELTALLLRFLRSSAAGQARAIYILGDLFDFWVGDDEVSELNTSVAREIRKLSDKGVAVFFVRGNRDFLIGQDFCRQAGMTLLPDYSVLDLFGCKTLICHGDTLCTDDRAYQRFRKIVHRKRLQKLFLMLPLKWRTRLATKIRRVSKMEKQVKPADIMDVNAAFTARQVRAFGAERLIHGHTHREHIHHENGFTRIVLGDWHNDYASILRVDGDGAVFVPLEKY</sequence>
<organism>
    <name type="scientific">Neisseria meningitidis serogroup B (strain ATCC BAA-335 / MC58)</name>
    <dbReference type="NCBI Taxonomy" id="122586"/>
    <lineage>
        <taxon>Bacteria</taxon>
        <taxon>Pseudomonadati</taxon>
        <taxon>Pseudomonadota</taxon>
        <taxon>Betaproteobacteria</taxon>
        <taxon>Neisseriales</taxon>
        <taxon>Neisseriaceae</taxon>
        <taxon>Neisseria</taxon>
    </lineage>
</organism>
<feature type="chain" id="PRO_0000214114" description="UDP-2,3-diacylglucosamine hydrolase">
    <location>
        <begin position="1"/>
        <end position="240"/>
    </location>
</feature>
<feature type="binding site" evidence="1">
    <location>
        <position position="9"/>
    </location>
    <ligand>
        <name>Mn(2+)</name>
        <dbReference type="ChEBI" id="CHEBI:29035"/>
        <label>1</label>
    </ligand>
</feature>
<feature type="binding site" evidence="1">
    <location>
        <position position="11"/>
    </location>
    <ligand>
        <name>Mn(2+)</name>
        <dbReference type="ChEBI" id="CHEBI:29035"/>
        <label>1</label>
    </ligand>
</feature>
<feature type="binding site" evidence="1">
    <location>
        <position position="43"/>
    </location>
    <ligand>
        <name>Mn(2+)</name>
        <dbReference type="ChEBI" id="CHEBI:29035"/>
        <label>1</label>
    </ligand>
</feature>
<feature type="binding site" evidence="1">
    <location>
        <position position="43"/>
    </location>
    <ligand>
        <name>Mn(2+)</name>
        <dbReference type="ChEBI" id="CHEBI:29035"/>
        <label>2</label>
    </ligand>
</feature>
<feature type="binding site" evidence="1">
    <location>
        <begin position="81"/>
        <end position="82"/>
    </location>
    <ligand>
        <name>substrate</name>
    </ligand>
</feature>
<feature type="binding site" evidence="1">
    <location>
        <position position="81"/>
    </location>
    <ligand>
        <name>Mn(2+)</name>
        <dbReference type="ChEBI" id="CHEBI:29035"/>
        <label>2</label>
    </ligand>
</feature>
<feature type="binding site" evidence="1">
    <location>
        <position position="116"/>
    </location>
    <ligand>
        <name>Mn(2+)</name>
        <dbReference type="ChEBI" id="CHEBI:29035"/>
        <label>2</label>
    </ligand>
</feature>
<feature type="binding site" evidence="1">
    <location>
        <position position="124"/>
    </location>
    <ligand>
        <name>substrate</name>
    </ligand>
</feature>
<feature type="binding site" evidence="1">
    <location>
        <position position="162"/>
    </location>
    <ligand>
        <name>substrate</name>
    </ligand>
</feature>
<feature type="binding site" evidence="1">
    <location>
        <position position="166"/>
    </location>
    <ligand>
        <name>substrate</name>
    </ligand>
</feature>
<feature type="binding site" evidence="1">
    <location>
        <position position="169"/>
    </location>
    <ligand>
        <name>substrate</name>
    </ligand>
</feature>
<feature type="binding site" evidence="1">
    <location>
        <position position="197"/>
    </location>
    <ligand>
        <name>Mn(2+)</name>
        <dbReference type="ChEBI" id="CHEBI:29035"/>
        <label>2</label>
    </ligand>
</feature>
<feature type="binding site" evidence="1">
    <location>
        <position position="197"/>
    </location>
    <ligand>
        <name>substrate</name>
    </ligand>
</feature>
<feature type="binding site" evidence="1">
    <location>
        <position position="199"/>
    </location>
    <ligand>
        <name>Mn(2+)</name>
        <dbReference type="ChEBI" id="CHEBI:29035"/>
        <label>1</label>
    </ligand>
</feature>
<protein>
    <recommendedName>
        <fullName evidence="1">UDP-2,3-diacylglucosamine hydrolase</fullName>
        <ecNumber evidence="1">3.6.1.54</ecNumber>
    </recommendedName>
    <alternativeName>
        <fullName evidence="1">UDP-2,3-diacylglucosamine diphosphatase</fullName>
    </alternativeName>
</protein>
<keyword id="KW-0997">Cell inner membrane</keyword>
<keyword id="KW-1003">Cell membrane</keyword>
<keyword id="KW-0378">Hydrolase</keyword>
<keyword id="KW-0441">Lipid A biosynthesis</keyword>
<keyword id="KW-0444">Lipid biosynthesis</keyword>
<keyword id="KW-0443">Lipid metabolism</keyword>
<keyword id="KW-0464">Manganese</keyword>
<keyword id="KW-0472">Membrane</keyword>
<keyword id="KW-0479">Metal-binding</keyword>
<keyword id="KW-1185">Reference proteome</keyword>
<proteinExistence type="inferred from homology"/>
<accession>Q9K0P2</accession>
<comment type="function">
    <text evidence="1">Hydrolyzes the pyrophosphate bond of UDP-2,3-diacylglucosamine to yield 2,3-diacylglucosamine 1-phosphate (lipid X) and UMP by catalyzing the attack of water at the alpha-P atom. Involved in the biosynthesis of lipid A, a phosphorylated glycolipid that anchors the lipopolysaccharide to the outer membrane of the cell.</text>
</comment>
<comment type="catalytic activity">
    <reaction evidence="1">
        <text>UDP-2-N,3-O-bis[(3R)-3-hydroxytetradecanoyl]-alpha-D-glucosamine + H2O = 2-N,3-O-bis[(3R)-3-hydroxytetradecanoyl]-alpha-D-glucosaminyl 1-phosphate + UMP + 2 H(+)</text>
        <dbReference type="Rhea" id="RHEA:25213"/>
        <dbReference type="ChEBI" id="CHEBI:15377"/>
        <dbReference type="ChEBI" id="CHEBI:15378"/>
        <dbReference type="ChEBI" id="CHEBI:57865"/>
        <dbReference type="ChEBI" id="CHEBI:57957"/>
        <dbReference type="ChEBI" id="CHEBI:78847"/>
        <dbReference type="EC" id="3.6.1.54"/>
    </reaction>
</comment>
<comment type="cofactor">
    <cofactor evidence="1">
        <name>Mn(2+)</name>
        <dbReference type="ChEBI" id="CHEBI:29035"/>
    </cofactor>
    <text evidence="1">Binds 2 Mn(2+) ions per subunit in a binuclear metal center.</text>
</comment>
<comment type="pathway">
    <text evidence="1">Glycolipid biosynthesis; lipid IV(A) biosynthesis; lipid IV(A) from (3R)-3-hydroxytetradecanoyl-[acyl-carrier-protein] and UDP-N-acetyl-alpha-D-glucosamine: step 4/6.</text>
</comment>
<comment type="subcellular location">
    <subcellularLocation>
        <location evidence="1">Cell inner membrane</location>
        <topology evidence="1">Peripheral membrane protein</topology>
        <orientation evidence="1">Cytoplasmic side</orientation>
    </subcellularLocation>
</comment>
<comment type="similarity">
    <text evidence="1">Belongs to the LpxH family.</text>
</comment>
<name>LPXH_NEIMB</name>
<dbReference type="EC" id="3.6.1.54" evidence="1"/>
<dbReference type="EMBL" id="AE002098">
    <property type="protein sequence ID" value="AAF40973.1"/>
    <property type="molecule type" value="Genomic_DNA"/>
</dbReference>
<dbReference type="PIR" id="F81186">
    <property type="entry name" value="F81186"/>
</dbReference>
<dbReference type="RefSeq" id="NP_273589.1">
    <property type="nucleotide sequence ID" value="NC_003112.2"/>
</dbReference>
<dbReference type="RefSeq" id="WP_002225581.1">
    <property type="nucleotide sequence ID" value="NC_003112.2"/>
</dbReference>
<dbReference type="SMR" id="Q9K0P2"/>
<dbReference type="FunCoup" id="Q9K0P2">
    <property type="interactions" value="128"/>
</dbReference>
<dbReference type="STRING" id="122586.NMB0544"/>
<dbReference type="PaxDb" id="122586-NMB0544"/>
<dbReference type="KEGG" id="nme:NMB0544"/>
<dbReference type="PATRIC" id="fig|122586.8.peg.692"/>
<dbReference type="HOGENOM" id="CLU_074586_0_0_4"/>
<dbReference type="InParanoid" id="Q9K0P2"/>
<dbReference type="OrthoDB" id="9783283at2"/>
<dbReference type="UniPathway" id="UPA00359">
    <property type="reaction ID" value="UER00480"/>
</dbReference>
<dbReference type="Proteomes" id="UP000000425">
    <property type="component" value="Chromosome"/>
</dbReference>
<dbReference type="GO" id="GO:0005737">
    <property type="term" value="C:cytoplasm"/>
    <property type="evidence" value="ECO:0007669"/>
    <property type="project" value="InterPro"/>
</dbReference>
<dbReference type="GO" id="GO:0019897">
    <property type="term" value="C:extrinsic component of plasma membrane"/>
    <property type="evidence" value="ECO:0007669"/>
    <property type="project" value="UniProtKB-UniRule"/>
</dbReference>
<dbReference type="GO" id="GO:0030145">
    <property type="term" value="F:manganese ion binding"/>
    <property type="evidence" value="ECO:0007669"/>
    <property type="project" value="UniProtKB-UniRule"/>
</dbReference>
<dbReference type="GO" id="GO:0008758">
    <property type="term" value="F:UDP-2,3-diacylglucosamine hydrolase activity"/>
    <property type="evidence" value="ECO:0000318"/>
    <property type="project" value="GO_Central"/>
</dbReference>
<dbReference type="GO" id="GO:0009245">
    <property type="term" value="P:lipid A biosynthetic process"/>
    <property type="evidence" value="ECO:0000318"/>
    <property type="project" value="GO_Central"/>
</dbReference>
<dbReference type="CDD" id="cd07398">
    <property type="entry name" value="MPP_YbbF-LpxH"/>
    <property type="match status" value="1"/>
</dbReference>
<dbReference type="Gene3D" id="3.60.21.10">
    <property type="match status" value="1"/>
</dbReference>
<dbReference type="HAMAP" id="MF_00575">
    <property type="entry name" value="LpxH"/>
    <property type="match status" value="1"/>
</dbReference>
<dbReference type="InterPro" id="IPR004843">
    <property type="entry name" value="Calcineurin-like_PHP_ApaH"/>
</dbReference>
<dbReference type="InterPro" id="IPR043461">
    <property type="entry name" value="LpxH-like"/>
</dbReference>
<dbReference type="InterPro" id="IPR029052">
    <property type="entry name" value="Metallo-depent_PP-like"/>
</dbReference>
<dbReference type="InterPro" id="IPR010138">
    <property type="entry name" value="UDP-diacylglucosamine_Hdrlase"/>
</dbReference>
<dbReference type="NCBIfam" id="TIGR01854">
    <property type="entry name" value="lipid_A_lpxH"/>
    <property type="match status" value="1"/>
</dbReference>
<dbReference type="NCBIfam" id="NF003743">
    <property type="entry name" value="PRK05340.1"/>
    <property type="match status" value="1"/>
</dbReference>
<dbReference type="PANTHER" id="PTHR34990:SF1">
    <property type="entry name" value="UDP-2,3-DIACYLGLUCOSAMINE HYDROLASE"/>
    <property type="match status" value="1"/>
</dbReference>
<dbReference type="PANTHER" id="PTHR34990">
    <property type="entry name" value="UDP-2,3-DIACYLGLUCOSAMINE HYDROLASE-RELATED"/>
    <property type="match status" value="1"/>
</dbReference>
<dbReference type="Pfam" id="PF00149">
    <property type="entry name" value="Metallophos"/>
    <property type="match status" value="1"/>
</dbReference>
<dbReference type="SUPFAM" id="SSF56300">
    <property type="entry name" value="Metallo-dependent phosphatases"/>
    <property type="match status" value="1"/>
</dbReference>
<gene>
    <name evidence="1" type="primary">lpxH</name>
    <name type="ordered locus">NMB0544</name>
</gene>
<reference key="1">
    <citation type="journal article" date="2000" name="Science">
        <title>Complete genome sequence of Neisseria meningitidis serogroup B strain MC58.</title>
        <authorList>
            <person name="Tettelin H."/>
            <person name="Saunders N.J."/>
            <person name="Heidelberg J.F."/>
            <person name="Jeffries A.C."/>
            <person name="Nelson K.E."/>
            <person name="Eisen J.A."/>
            <person name="Ketchum K.A."/>
            <person name="Hood D.W."/>
            <person name="Peden J.F."/>
            <person name="Dodson R.J."/>
            <person name="Nelson W.C."/>
            <person name="Gwinn M.L."/>
            <person name="DeBoy R.T."/>
            <person name="Peterson J.D."/>
            <person name="Hickey E.K."/>
            <person name="Haft D.H."/>
            <person name="Salzberg S.L."/>
            <person name="White O."/>
            <person name="Fleischmann R.D."/>
            <person name="Dougherty B.A."/>
            <person name="Mason T.M."/>
            <person name="Ciecko A."/>
            <person name="Parksey D.S."/>
            <person name="Blair E."/>
            <person name="Cittone H."/>
            <person name="Clark E.B."/>
            <person name="Cotton M.D."/>
            <person name="Utterback T.R."/>
            <person name="Khouri H.M."/>
            <person name="Qin H."/>
            <person name="Vamathevan J.J."/>
            <person name="Gill J."/>
            <person name="Scarlato V."/>
            <person name="Masignani V."/>
            <person name="Pizza M."/>
            <person name="Grandi G."/>
            <person name="Sun L."/>
            <person name="Smith H.O."/>
            <person name="Fraser C.M."/>
            <person name="Moxon E.R."/>
            <person name="Rappuoli R."/>
            <person name="Venter J.C."/>
        </authorList>
    </citation>
    <scope>NUCLEOTIDE SEQUENCE [LARGE SCALE GENOMIC DNA]</scope>
    <source>
        <strain>ATCC BAA-335 / MC58</strain>
    </source>
</reference>